<organism>
    <name type="scientific">Rotavirus A (strain RVA/Human/Indonesia/69M/1980/G8P4[10])</name>
    <name type="common">RV-A</name>
    <dbReference type="NCBI Taxonomy" id="10947"/>
    <lineage>
        <taxon>Viruses</taxon>
        <taxon>Riboviria</taxon>
        <taxon>Orthornavirae</taxon>
        <taxon>Duplornaviricota</taxon>
        <taxon>Resentoviricetes</taxon>
        <taxon>Reovirales</taxon>
        <taxon>Sedoreoviridae</taxon>
        <taxon>Rotavirus</taxon>
        <taxon>Rotavirus A</taxon>
    </lineage>
</organism>
<sequence length="776" mass="86466">MRSLIYRQLLTNSYTVDLSDEIESIGSKNTQNVTINPGPFAQTGYAPVNWGPGEVNDSTTVEPTLDGPYQPTSFNPPVNYWMLLAPLNAGVIVEGTNNTNRWLATILVEPGVASTTRTYTLFGIQEQITVENSSNTKWKFIDLMKTTSSGTYTQHSPLLSEPKLYGIMKHGGQLWTYNGETPNAITNGYPTTNYDSVNMTSFCNFYIIPRSQESVRTGYINNGLPPIQNTRNIVPVSISSRSIIHQRAQANEDIIVSKTSLWKEMKYNRDITIRFKFANAIIKSGGLGYKWSEISFKPANYQYTYTRDGEEVNAHTTCSVNGVNDFSFNGGSLPTDFVISRYEVIKENSYVYVDYWDDSQAFRNMVYVRSLAADLNDVLCTGGDYSFALPVGQWPVMTGGAVSLHSAGVTLSTQFTDFVSLNSLRFRFRLSVEEPHFSITRTRVTGLYGLPAANPNNNNEYYEVAGRFSLISLVPSNDDYQTPIANSVTVRQDLERQLGELREEFNALSQEIAMSQLIDLALLPLDMFSMFSGIKSTIDAAKSMATNVMKKFKKSGLATSVSTLTDSLSDAASSISRGSSIRSIGSSASAWTDVSTQLIDVSSTVNTISTQTSTISRRLRLKEIATQTEGMNFDDISAAVLKTKIDRSTQIAPATLPDIVTEASEKFIPNRAYRVMDNNEVLEASTDGRLCAYRVETFEEIPFDVQKFADLVTDSPVISAIIDFKTLKNLNDNYGISREQAFNLLRSDPRMLREFINQDNPIIRNRIEQLILQCRL</sequence>
<dbReference type="EMBL" id="M60600">
    <property type="protein sequence ID" value="AAA47336.1"/>
    <property type="molecule type" value="Genomic_RNA"/>
</dbReference>
<dbReference type="EMBL" id="EF672556">
    <property type="protein sequence ID" value="ABV53228.1"/>
    <property type="molecule type" value="Genomic_DNA"/>
</dbReference>
<dbReference type="SMR" id="P26451"/>
<dbReference type="Proteomes" id="UP000001455">
    <property type="component" value="Genome"/>
</dbReference>
<dbReference type="GO" id="GO:0044172">
    <property type="term" value="C:host cell endoplasmic reticulum-Golgi intermediate compartment"/>
    <property type="evidence" value="ECO:0007669"/>
    <property type="project" value="UniProtKB-SubCell"/>
</dbReference>
<dbReference type="GO" id="GO:0020002">
    <property type="term" value="C:host cell plasma membrane"/>
    <property type="evidence" value="ECO:0007669"/>
    <property type="project" value="UniProtKB-SubCell"/>
</dbReference>
<dbReference type="GO" id="GO:0044168">
    <property type="term" value="C:host cell rough endoplasmic reticulum"/>
    <property type="evidence" value="ECO:0007669"/>
    <property type="project" value="UniProtKB-SubCell"/>
</dbReference>
<dbReference type="GO" id="GO:0044163">
    <property type="term" value="C:host cytoskeleton"/>
    <property type="evidence" value="ECO:0007669"/>
    <property type="project" value="UniProtKB-SubCell"/>
</dbReference>
<dbReference type="GO" id="GO:0016020">
    <property type="term" value="C:membrane"/>
    <property type="evidence" value="ECO:0007669"/>
    <property type="project" value="UniProtKB-KW"/>
</dbReference>
<dbReference type="GO" id="GO:0039624">
    <property type="term" value="C:viral outer capsid"/>
    <property type="evidence" value="ECO:0007669"/>
    <property type="project" value="UniProtKB-UniRule"/>
</dbReference>
<dbReference type="GO" id="GO:0039665">
    <property type="term" value="P:permeabilization of host organelle membrane involved in viral entry into host cell"/>
    <property type="evidence" value="ECO:0007669"/>
    <property type="project" value="UniProtKB-UniRule"/>
</dbReference>
<dbReference type="GO" id="GO:0019062">
    <property type="term" value="P:virion attachment to host cell"/>
    <property type="evidence" value="ECO:0007669"/>
    <property type="project" value="UniProtKB-UniRule"/>
</dbReference>
<dbReference type="Gene3D" id="1.20.5.170">
    <property type="match status" value="1"/>
</dbReference>
<dbReference type="Gene3D" id="2.60.120.200">
    <property type="match status" value="1"/>
</dbReference>
<dbReference type="HAMAP" id="MF_04132">
    <property type="entry name" value="Rota_A_VP4"/>
    <property type="match status" value="1"/>
</dbReference>
<dbReference type="HAMAP" id="MF_04125">
    <property type="entry name" value="Rota_VP4"/>
    <property type="match status" value="1"/>
</dbReference>
<dbReference type="InterPro" id="IPR013320">
    <property type="entry name" value="ConA-like_dom_sf"/>
</dbReference>
<dbReference type="InterPro" id="IPR042546">
    <property type="entry name" value="Rota_A_VP4"/>
</dbReference>
<dbReference type="InterPro" id="IPR035330">
    <property type="entry name" value="Rota_VP4_MID"/>
</dbReference>
<dbReference type="InterPro" id="IPR038017">
    <property type="entry name" value="Rota_VP4_MID_sf"/>
</dbReference>
<dbReference type="InterPro" id="IPR000416">
    <property type="entry name" value="VP4_concanavalin-like"/>
</dbReference>
<dbReference type="InterPro" id="IPR035329">
    <property type="entry name" value="VP4_helical"/>
</dbReference>
<dbReference type="Pfam" id="PF17477">
    <property type="entry name" value="Rota_VP4_MID"/>
    <property type="match status" value="1"/>
</dbReference>
<dbReference type="Pfam" id="PF00426">
    <property type="entry name" value="VP4_haemagglut"/>
    <property type="match status" value="1"/>
</dbReference>
<dbReference type="Pfam" id="PF17478">
    <property type="entry name" value="VP4_helical"/>
    <property type="match status" value="1"/>
</dbReference>
<dbReference type="SUPFAM" id="SSF49899">
    <property type="entry name" value="Concanavalin A-like lectins/glucanases"/>
    <property type="match status" value="1"/>
</dbReference>
<dbReference type="SUPFAM" id="SSF111379">
    <property type="entry name" value="VP4 membrane interaction domain"/>
    <property type="match status" value="1"/>
</dbReference>
<protein>
    <recommendedName>
        <fullName evidence="1">Outer capsid protein VP4</fullName>
    </recommendedName>
    <alternativeName>
        <fullName evidence="1">Hemagglutinin</fullName>
    </alternativeName>
    <component>
        <recommendedName>
            <fullName evidence="1">Outer capsid protein VP8*</fullName>
        </recommendedName>
    </component>
    <component>
        <recommendedName>
            <fullName evidence="1">Outer capsid protein VP5*</fullName>
        </recommendedName>
    </component>
</protein>
<comment type="function">
    <molecule>Outer capsid protein VP4</molecule>
    <text evidence="1">Spike-forming protein that mediates virion attachment to the host epithelial cell receptors and plays a major role in cell penetration, determination of host range restriction and virulence. Rotavirus attachment and entry into the host cell probably involves multiple sequential contacts between the outer capsid proteins VP4 and VP7, and the cell receptors. It is subsequently lost, together with VP7, following virus entry into the host cell. Following entry into the host cell, low intracellular or intravesicular Ca(2+) concentration probably causes the calcium-stabilized VP7 trimers to dissociate from the virion. This step is probably necessary for the membrane-disrupting entry step and the release of VP4, which is locked onto the virion by VP7. During the virus exit from the host cell, VP4 seems to be required to target the newly formed virions to the host cell lipid rafts.</text>
</comment>
<comment type="function">
    <molecule>Outer capsid protein VP5*</molecule>
    <text evidence="1">Forms the spike 'foot' and 'body' and acts as a membrane permeabilization protein that mediates release of viral particles from endosomal compartments into the cytoplasm. During entry, the part of VP5* that protrudes from the virus folds back on itself and reorganizes from a local dimer to a trimer. This reorganization may be linked to membrane penetration by exposing VP5* hydrophobic region. In integrin-dependent strains, VP5* targets the integrin heterodimer ITGA2/ITGB1 for cell attachment.</text>
</comment>
<comment type="function">
    <molecule>Outer capsid protein VP8*</molecule>
    <text evidence="1">Forms the head of the spikes and mediates the recognition of specific host cell surface glycans. It is the viral hemagglutinin and an important target of neutralizing antibodies. In sialic acid-dependent strains, VP8* binds to host cell sialic acid, most probably a ganglioside, providing the initial contact. In some other strains, VP8* mediates the attachment to histo-blood group antigens (HBGAs) for viral entry.</text>
</comment>
<comment type="subunit">
    <molecule>Outer capsid protein VP4</molecule>
    <text evidence="1">Homotrimer. VP4 adopts a dimeric appearance above the capsid surface, while forming a trimeric base anchored inside the capsid layer. Only hints of the third molecule are observed above the capsid surface. It probably performs a series of molecular rearrangements during viral entry. Prior to trypsin cleavage, it is flexible. The priming trypsin cleavage triggers its rearrangement into rigid spikes with approximate two-fold symmetry of their protruding parts. After an unknown second triggering event, cleaved VP4 may undergo another rearrangement, in which two VP5* subunits fold back on themselves and join a third subunit to form a tightly associated trimer, shaped like a folded umbrella. Interacts with VP6. Interacts with VP7.</text>
</comment>
<comment type="subunit">
    <molecule>Outer capsid protein VP5*</molecule>
    <text evidence="1">Homotrimer. The trimer is coiled-coil stabilized by its C-terminus, however, its N-terminus, known as antigen domain or 'body', seems to be flexible allowing it to self-associate either as a dimer or a trimer.</text>
</comment>
<comment type="subcellular location">
    <molecule>Outer capsid protein VP4</molecule>
    <subcellularLocation>
        <location evidence="1">Virion</location>
    </subcellularLocation>
    <subcellularLocation>
        <location evidence="1">Host rough endoplasmic reticulum</location>
    </subcellularLocation>
    <subcellularLocation>
        <location evidence="1">Host cell membrane</location>
    </subcellularLocation>
    <subcellularLocation>
        <location evidence="1">Host cytoplasm</location>
        <location evidence="1">Host cytoskeleton</location>
    </subcellularLocation>
    <subcellularLocation>
        <location evidence="1">Host endoplasmic reticulum-Golgi intermediate compartment</location>
    </subcellularLocation>
    <text evidence="1">The outer layer contains 180 copies of VP4, grouped as 60 dimers. Immature double-layered particles assembled in the cytoplasm bud across the membrane of the endoplasmic reticulum, acquiring during this process a transient lipid membrane that is modified with the ER resident viral glycoproteins NSP4 and VP7; these enveloped particles also contain VP4. As the particles move towards the interior of the ER cisternae, the transient lipid membrane and the non-structural protein NSP4 are lost, while the virus surface proteins VP4 and VP7 rearrange to form the outermost virus protein layer, yielding mature infectious triple-layered particles. VP4 also seems to associate with lipid rafts of the host cell membrane probably for the exit of the virus from the infected cell by an alternate pathway.</text>
</comment>
<comment type="subcellular location">
    <molecule>Outer capsid protein VP8*</molecule>
    <subcellularLocation>
        <location evidence="1">Virion</location>
    </subcellularLocation>
    <text evidence="1">Outer capsid protein.</text>
</comment>
<comment type="subcellular location">
    <molecule>Outer capsid protein VP5*</molecule>
    <subcellularLocation>
        <location evidence="1">Virion</location>
    </subcellularLocation>
    <text evidence="1">Outer capsid protein.</text>
</comment>
<comment type="domain">
    <molecule>Outer capsid protein VP4</molecule>
    <text evidence="1">The VP4 spike is divided into a foot, a stalk and body, and a head.</text>
</comment>
<comment type="PTM">
    <molecule>Outer capsid protein VP4</molecule>
    <text evidence="1">Proteolytic cleavage by trypsin results in activation of VP4 functions and greatly increases infectivity. The penetration into the host cell is dependent on trypsin treatment of VP4. It produces two peptides, VP5* and VP8* that remain associated with the virion. Cleavage of VP4 by trypsin probably occurs in vivo in the lumen of the intestine prior to infection of enterocytes. Trypsin seems to be incorporated into the three-layered viral particles but remains inactive as long as the viral outer capsid is intact and would only be activated upon the solubilization of the latter.</text>
</comment>
<comment type="miscellaneous">
    <text evidence="2 3">This strain probably does not use sialic acid to attach to the host cell.</text>
</comment>
<comment type="miscellaneous">
    <text evidence="1">In group A rotaviruses, VP4 defines the P serotype.</text>
</comment>
<comment type="miscellaneous">
    <text evidence="1">Some rotavirus strains are neuraminidase-sensitive and require sialic acid to attach to the cell surface. Some rotavirus strains are integrin-dependent. Some rotavirus strains depend on ganglioside for their entry into the host cell. Hsp70 also seems to be involved in the entry of some strains.</text>
</comment>
<comment type="similarity">
    <text evidence="1">Belongs to the rotavirus VP4 family.</text>
</comment>
<evidence type="ECO:0000255" key="1">
    <source>
        <dbReference type="HAMAP-Rule" id="MF_04132"/>
    </source>
</evidence>
<evidence type="ECO:0000269" key="2">
    <source>
    </source>
</evidence>
<evidence type="ECO:0000303" key="3">
    <source>
    </source>
</evidence>
<evidence type="ECO:0000305" key="4"/>
<name>VP4_ROTH6</name>
<proteinExistence type="inferred from homology"/>
<reference key="1">
    <citation type="journal article" date="1991" name="Virology">
        <title>Human rotavirus strain 69M has a unique VP4 as determined by amino acid sequence analysis.</title>
        <authorList>
            <person name="Qian Y.A."/>
            <person name="Green K.Y."/>
        </authorList>
    </citation>
    <scope>NUCLEOTIDE SEQUENCE [GENOMIC RNA]</scope>
</reference>
<reference key="2">
    <citation type="journal article" date="2008" name="J. Virol.">
        <title>Group A human rotavirus genomics: evidence that gene constellations are influenced by viral protein interactions.</title>
        <authorList>
            <person name="Heiman E.M."/>
            <person name="McDonald S.M."/>
            <person name="Barro M."/>
            <person name="Taraporewala Z.F."/>
            <person name="Bar-Magen T."/>
            <person name="Patton J.T."/>
        </authorList>
    </citation>
    <scope>NUCLEOTIDE SEQUENCE [GENOMIC DNA]</scope>
</reference>
<reference key="3">
    <citation type="journal article" date="2002" name="J. Virol.">
        <title>Initial interaction of rotavirus strains with N-acetylneuraminic (sialic) acid residues on the cell surface correlates with VP4 genotype, not species of origin.</title>
        <authorList>
            <person name="Ciarlet M."/>
            <person name="Ludert J.E."/>
            <person name="Iturriza-Gomara M."/>
            <person name="Liprandi F."/>
            <person name="Gray J.J."/>
            <person name="Desselberger U."/>
            <person name="Estes M.K."/>
        </authorList>
    </citation>
    <scope>SIALIC ACID INDEPENDENCY</scope>
</reference>
<reference key="4">
    <citation type="journal article" date="2006" name="Glycoconj. J.">
        <title>Role of sialic acids in rotavirus infection.</title>
        <authorList>
            <person name="Isa P."/>
            <person name="Arias C.F."/>
            <person name="Lopez S."/>
        </authorList>
    </citation>
    <scope>REVIEW</scope>
</reference>
<keyword id="KW-0167">Capsid protein</keyword>
<keyword id="KW-0175">Coiled coil</keyword>
<keyword id="KW-1015">Disulfide bond</keyword>
<keyword id="KW-0348">Hemagglutinin</keyword>
<keyword id="KW-1032">Host cell membrane</keyword>
<keyword id="KW-1035">Host cytoplasm</keyword>
<keyword id="KW-1037">Host cytoskeleton</keyword>
<keyword id="KW-1038">Host endoplasmic reticulum</keyword>
<keyword id="KW-1043">Host membrane</keyword>
<keyword id="KW-0945">Host-virus interaction</keyword>
<keyword id="KW-0472">Membrane</keyword>
<keyword id="KW-1152">Outer capsid protein</keyword>
<keyword id="KW-1161">Viral attachment to host cell</keyword>
<keyword id="KW-1162">Viral penetration into host cytoplasm</keyword>
<keyword id="KW-1173">Viral penetration via permeabilization of host membrane</keyword>
<keyword id="KW-0946">Virion</keyword>
<keyword id="KW-1160">Virus entry into host cell</keyword>
<accession>P26451</accession>
<accession>B3SRQ3</accession>
<feature type="chain" id="PRO_0000041051" description="Outer capsid protein VP4" evidence="1">
    <location>
        <begin position="1"/>
        <end position="776"/>
    </location>
</feature>
<feature type="chain" id="PRO_0000041052" description="Outer capsid protein VP8*" evidence="1">
    <location>
        <begin position="1"/>
        <end position="231"/>
    </location>
</feature>
<feature type="chain" id="PRO_0000041053" description="Outer capsid protein VP5*" evidence="1">
    <location>
        <begin position="248"/>
        <end position="776"/>
    </location>
</feature>
<feature type="region of interest" description="Spike head" evidence="1">
    <location>
        <begin position="65"/>
        <end position="224"/>
    </location>
</feature>
<feature type="region of interest" description="Spike body and stalk (antigen domain)" evidence="1">
    <location>
        <begin position="248"/>
        <end position="479"/>
    </location>
</feature>
<feature type="region of interest" description="Hydrophobic; possible role in virus entry into host cell" evidence="1">
    <location>
        <begin position="389"/>
        <end position="409"/>
    </location>
</feature>
<feature type="region of interest" description="Spike foot" evidence="1">
    <location>
        <begin position="510"/>
        <end position="776"/>
    </location>
</feature>
<feature type="coiled-coil region" evidence="1">
    <location>
        <begin position="484"/>
        <end position="511"/>
    </location>
</feature>
<feature type="short sequence motif" description="DGE motif; interaction with ITGA2/ITGB1 heterodimer" evidence="1">
    <location>
        <begin position="308"/>
        <end position="310"/>
    </location>
</feature>
<feature type="short sequence motif" description="YGL motif; interaction with ITGA4" evidence="1">
    <location>
        <begin position="448"/>
        <end position="450"/>
    </location>
</feature>
<feature type="short sequence motif" description="KID motif; interaction with HSPA8" evidence="1">
    <location>
        <begin position="644"/>
        <end position="646"/>
    </location>
</feature>
<feature type="site" description="Cleavage" evidence="1">
    <location>
        <begin position="231"/>
        <end position="232"/>
    </location>
</feature>
<feature type="site" description="Cleavage" evidence="1">
    <location>
        <begin position="241"/>
        <end position="242"/>
    </location>
</feature>
<feature type="site" description="Cleavage; associated with enhancement of infectivity" evidence="1">
    <location>
        <begin position="247"/>
        <end position="248"/>
    </location>
</feature>
<feature type="disulfide bond" evidence="1">
    <location>
        <begin position="318"/>
        <end position="380"/>
    </location>
</feature>
<feature type="sequence conflict" description="In Ref. 2; ABV53228." evidence="4" ref="2">
    <original>R</original>
    <variation>A</variation>
    <location>
        <position position="2"/>
    </location>
</feature>
<feature type="sequence conflict" description="In Ref. 2; ABV53228." evidence="4" ref="2">
    <original>L</original>
    <variation>V</variation>
    <location>
        <position position="261"/>
    </location>
</feature>
<feature type="sequence conflict" description="In Ref. 2; ABV53228." evidence="4" ref="2">
    <original>LC</original>
    <variation>FF</variation>
    <location>
        <begin position="690"/>
        <end position="691"/>
    </location>
</feature>
<organismHost>
    <name type="scientific">Homo sapiens</name>
    <name type="common">Human</name>
    <dbReference type="NCBI Taxonomy" id="9606"/>
</organismHost>